<proteinExistence type="inferred from homology"/>
<gene>
    <name evidence="1" type="primary">rplY</name>
    <name evidence="1" type="synonym">ctc</name>
    <name type="ordered locus">Mmar10_0757</name>
</gene>
<comment type="function">
    <text evidence="1">This is one of the proteins that binds to the 5S RNA in the ribosome where it forms part of the central protuberance.</text>
</comment>
<comment type="subunit">
    <text evidence="1">Part of the 50S ribosomal subunit; part of the 5S rRNA/L5/L18/L25 subcomplex. Contacts the 5S rRNA. Binds to the 5S rRNA independently of L5 and L18.</text>
</comment>
<comment type="similarity">
    <text evidence="1">Belongs to the bacterial ribosomal protein bL25 family. CTC subfamily.</text>
</comment>
<sequence>MSSNIVLTVDVREGTGKGAARAARREDLVPGIVYGGKLDPVSVTLRGNEIRKALLGGHFLSNMIEIDHKGKRQTVIARDIQFHPVSDKAMHIDLYRVDEDTKINVNVAVNFTNEDACPALKRGGVLNIVRHDVELLCPAGSIPESVEADLTGLDIGDSLHISAIKLPKGVVPTITDRDFTVATLQGSRAVLTDAEEETDETPEEPEAIRQKGDEE</sequence>
<protein>
    <recommendedName>
        <fullName evidence="1">Large ribosomal subunit protein bL25</fullName>
    </recommendedName>
    <alternativeName>
        <fullName evidence="3">50S ribosomal protein L25</fullName>
    </alternativeName>
    <alternativeName>
        <fullName evidence="1">General stress protein CTC</fullName>
    </alternativeName>
</protein>
<accession>Q0ARN7</accession>
<keyword id="KW-1185">Reference proteome</keyword>
<keyword id="KW-0687">Ribonucleoprotein</keyword>
<keyword id="KW-0689">Ribosomal protein</keyword>
<keyword id="KW-0694">RNA-binding</keyword>
<keyword id="KW-0699">rRNA-binding</keyword>
<organism>
    <name type="scientific">Maricaulis maris (strain MCS10)</name>
    <name type="common">Caulobacter maris</name>
    <dbReference type="NCBI Taxonomy" id="394221"/>
    <lineage>
        <taxon>Bacteria</taxon>
        <taxon>Pseudomonadati</taxon>
        <taxon>Pseudomonadota</taxon>
        <taxon>Alphaproteobacteria</taxon>
        <taxon>Maricaulales</taxon>
        <taxon>Maricaulaceae</taxon>
        <taxon>Maricaulis</taxon>
    </lineage>
</organism>
<name>RL25_MARMM</name>
<dbReference type="EMBL" id="CP000449">
    <property type="protein sequence ID" value="ABI65050.1"/>
    <property type="molecule type" value="Genomic_DNA"/>
</dbReference>
<dbReference type="RefSeq" id="WP_011642697.1">
    <property type="nucleotide sequence ID" value="NC_008347.1"/>
</dbReference>
<dbReference type="SMR" id="Q0ARN7"/>
<dbReference type="STRING" id="394221.Mmar10_0757"/>
<dbReference type="KEGG" id="mmr:Mmar10_0757"/>
<dbReference type="eggNOG" id="COG1825">
    <property type="taxonomic scope" value="Bacteria"/>
</dbReference>
<dbReference type="HOGENOM" id="CLU_075939_0_0_5"/>
<dbReference type="OrthoDB" id="9806411at2"/>
<dbReference type="Proteomes" id="UP000001964">
    <property type="component" value="Chromosome"/>
</dbReference>
<dbReference type="GO" id="GO:0022625">
    <property type="term" value="C:cytosolic large ribosomal subunit"/>
    <property type="evidence" value="ECO:0007669"/>
    <property type="project" value="TreeGrafter"/>
</dbReference>
<dbReference type="GO" id="GO:0008097">
    <property type="term" value="F:5S rRNA binding"/>
    <property type="evidence" value="ECO:0007669"/>
    <property type="project" value="InterPro"/>
</dbReference>
<dbReference type="GO" id="GO:0003735">
    <property type="term" value="F:structural constituent of ribosome"/>
    <property type="evidence" value="ECO:0007669"/>
    <property type="project" value="InterPro"/>
</dbReference>
<dbReference type="GO" id="GO:0006412">
    <property type="term" value="P:translation"/>
    <property type="evidence" value="ECO:0007669"/>
    <property type="project" value="UniProtKB-UniRule"/>
</dbReference>
<dbReference type="CDD" id="cd00495">
    <property type="entry name" value="Ribosomal_L25_TL5_CTC"/>
    <property type="match status" value="1"/>
</dbReference>
<dbReference type="Gene3D" id="2.170.120.20">
    <property type="entry name" value="Ribosomal protein L25, beta domain"/>
    <property type="match status" value="1"/>
</dbReference>
<dbReference type="Gene3D" id="2.40.240.10">
    <property type="entry name" value="Ribosomal Protein L25, Chain P"/>
    <property type="match status" value="1"/>
</dbReference>
<dbReference type="HAMAP" id="MF_01334">
    <property type="entry name" value="Ribosomal_bL25_CTC"/>
    <property type="match status" value="1"/>
</dbReference>
<dbReference type="InterPro" id="IPR020056">
    <property type="entry name" value="Rbsml_bL25/Gln-tRNA_synth_N"/>
</dbReference>
<dbReference type="InterPro" id="IPR011035">
    <property type="entry name" value="Ribosomal_bL25/Gln-tRNA_synth"/>
</dbReference>
<dbReference type="InterPro" id="IPR020057">
    <property type="entry name" value="Ribosomal_bL25_b-dom"/>
</dbReference>
<dbReference type="InterPro" id="IPR037121">
    <property type="entry name" value="Ribosomal_bL25_C"/>
</dbReference>
<dbReference type="InterPro" id="IPR001021">
    <property type="entry name" value="Ribosomal_bL25_long"/>
</dbReference>
<dbReference type="InterPro" id="IPR029751">
    <property type="entry name" value="Ribosomal_L25_dom"/>
</dbReference>
<dbReference type="InterPro" id="IPR020930">
    <property type="entry name" value="Ribosomal_uL5_bac-type"/>
</dbReference>
<dbReference type="NCBIfam" id="TIGR00731">
    <property type="entry name" value="bL25_bact_ctc"/>
    <property type="match status" value="1"/>
</dbReference>
<dbReference type="NCBIfam" id="NF004128">
    <property type="entry name" value="PRK05618.1-2"/>
    <property type="match status" value="1"/>
</dbReference>
<dbReference type="PANTHER" id="PTHR33284">
    <property type="entry name" value="RIBOSOMAL PROTEIN L25/GLN-TRNA SYNTHETASE, ANTI-CODON-BINDING DOMAIN-CONTAINING PROTEIN"/>
    <property type="match status" value="1"/>
</dbReference>
<dbReference type="PANTHER" id="PTHR33284:SF1">
    <property type="entry name" value="RIBOSOMAL PROTEIN L25_GLN-TRNA SYNTHETASE, ANTI-CODON-BINDING DOMAIN-CONTAINING PROTEIN"/>
    <property type="match status" value="1"/>
</dbReference>
<dbReference type="Pfam" id="PF01386">
    <property type="entry name" value="Ribosomal_L25p"/>
    <property type="match status" value="1"/>
</dbReference>
<dbReference type="Pfam" id="PF14693">
    <property type="entry name" value="Ribosomal_TL5_C"/>
    <property type="match status" value="1"/>
</dbReference>
<dbReference type="SUPFAM" id="SSF50715">
    <property type="entry name" value="Ribosomal protein L25-like"/>
    <property type="match status" value="1"/>
</dbReference>
<reference key="1">
    <citation type="submission" date="2006-08" db="EMBL/GenBank/DDBJ databases">
        <title>Complete sequence of Maricaulis maris MCS10.</title>
        <authorList>
            <consortium name="US DOE Joint Genome Institute"/>
            <person name="Copeland A."/>
            <person name="Lucas S."/>
            <person name="Lapidus A."/>
            <person name="Barry K."/>
            <person name="Detter J.C."/>
            <person name="Glavina del Rio T."/>
            <person name="Hammon N."/>
            <person name="Israni S."/>
            <person name="Dalin E."/>
            <person name="Tice H."/>
            <person name="Pitluck S."/>
            <person name="Saunders E."/>
            <person name="Brettin T."/>
            <person name="Bruce D."/>
            <person name="Han C."/>
            <person name="Tapia R."/>
            <person name="Gilna P."/>
            <person name="Schmutz J."/>
            <person name="Larimer F."/>
            <person name="Land M."/>
            <person name="Hauser L."/>
            <person name="Kyrpides N."/>
            <person name="Mikhailova N."/>
            <person name="Viollier P."/>
            <person name="Stephens C."/>
            <person name="Richardson P."/>
        </authorList>
    </citation>
    <scope>NUCLEOTIDE SEQUENCE [LARGE SCALE GENOMIC DNA]</scope>
    <source>
        <strain>MCS10</strain>
    </source>
</reference>
<evidence type="ECO:0000255" key="1">
    <source>
        <dbReference type="HAMAP-Rule" id="MF_01334"/>
    </source>
</evidence>
<evidence type="ECO:0000256" key="2">
    <source>
        <dbReference type="SAM" id="MobiDB-lite"/>
    </source>
</evidence>
<evidence type="ECO:0000305" key="3"/>
<feature type="chain" id="PRO_1000052902" description="Large ribosomal subunit protein bL25">
    <location>
        <begin position="1"/>
        <end position="215"/>
    </location>
</feature>
<feature type="region of interest" description="Disordered" evidence="2">
    <location>
        <begin position="190"/>
        <end position="215"/>
    </location>
</feature>
<feature type="compositionally biased region" description="Acidic residues" evidence="2">
    <location>
        <begin position="193"/>
        <end position="205"/>
    </location>
</feature>
<feature type="compositionally biased region" description="Basic and acidic residues" evidence="2">
    <location>
        <begin position="206"/>
        <end position="215"/>
    </location>
</feature>